<organism>
    <name type="scientific">Oryza sativa subsp. japonica</name>
    <name type="common">Rice</name>
    <dbReference type="NCBI Taxonomy" id="39947"/>
    <lineage>
        <taxon>Eukaryota</taxon>
        <taxon>Viridiplantae</taxon>
        <taxon>Streptophyta</taxon>
        <taxon>Embryophyta</taxon>
        <taxon>Tracheophyta</taxon>
        <taxon>Spermatophyta</taxon>
        <taxon>Magnoliopsida</taxon>
        <taxon>Liliopsida</taxon>
        <taxon>Poales</taxon>
        <taxon>Poaceae</taxon>
        <taxon>BOP clade</taxon>
        <taxon>Oryzoideae</taxon>
        <taxon>Oryzeae</taxon>
        <taxon>Oryzinae</taxon>
        <taxon>Oryza</taxon>
        <taxon>Oryza sativa</taxon>
    </lineage>
</organism>
<protein>
    <recommendedName>
        <fullName>Auxin-responsive protein IAA11</fullName>
    </recommendedName>
    <alternativeName>
        <fullName>Indoleacetic acid-induced protein 11</fullName>
    </alternativeName>
</protein>
<gene>
    <name type="primary">IAA11</name>
    <name type="ordered locus">Os03g0633500</name>
    <name type="ordered locus">LOC_Os03g43400</name>
    <name type="ORF">OSJNBa0010N03.17</name>
</gene>
<comment type="function">
    <text evidence="1">Aux/IAA proteins are short-lived transcriptional factors that function as repressors of early auxin response genes at low auxin concentrations.</text>
</comment>
<comment type="subunit">
    <text evidence="1">Homodimers and heterodimers.</text>
</comment>
<comment type="subcellular location">
    <subcellularLocation>
        <location evidence="1">Nucleus</location>
    </subcellularLocation>
</comment>
<comment type="tissue specificity">
    <text evidence="4">Highly expressed in etiolated shoots. Expressed in roots.</text>
</comment>
<comment type="induction">
    <text evidence="4">Not induced by auxin.</text>
</comment>
<comment type="similarity">
    <text evidence="5">Belongs to the Aux/IAA family.</text>
</comment>
<comment type="sequence caution" evidence="5">
    <conflict type="erroneous gene model prediction">
        <sequence resource="EMBL-CDS" id="BAF12627"/>
    </conflict>
</comment>
<comment type="sequence caution" evidence="5">
    <conflict type="erroneous gene model prediction">
        <sequence resource="EMBL-CDS" id="BAS85383"/>
    </conflict>
</comment>
<accession>Q75GK0</accession>
<accession>A0A0P0W0E9</accession>
<accession>Q0DQ61</accession>
<accession>Q10GD2</accession>
<sequence>MAGLGFDETELRLGLPGAGELAARSSGKRGFAETIDLKLKLQPAAPAAVSGEEGAQEDKEDADAAAAAADEKMSMKRSASQSSVVTAEPDPDKPRAPKAQVVGWPPVRSFRKNVLAEKCKAAALVKVSMDGAPYLRKIDVAMYKSYPELSMAFQNMFTSFTIGKCGSHQQLKESNKLRDDLEYVPTYEDKDGDWMLVGDVPWEMFVESCKRLRIMKGSEAIGLAPRAVEKCKS</sequence>
<reference key="1">
    <citation type="journal article" date="2005" name="Genome Res.">
        <title>Sequence, annotation, and analysis of synteny between rice chromosome 3 and diverged grass species.</title>
        <authorList>
            <consortium name="The rice chromosome 3 sequencing consortium"/>
            <person name="Buell C.R."/>
            <person name="Yuan Q."/>
            <person name="Ouyang S."/>
            <person name="Liu J."/>
            <person name="Zhu W."/>
            <person name="Wang A."/>
            <person name="Maiti R."/>
            <person name="Haas B."/>
            <person name="Wortman J."/>
            <person name="Pertea M."/>
            <person name="Jones K.M."/>
            <person name="Kim M."/>
            <person name="Overton L."/>
            <person name="Tsitrin T."/>
            <person name="Fadrosh D."/>
            <person name="Bera J."/>
            <person name="Weaver B."/>
            <person name="Jin S."/>
            <person name="Johri S."/>
            <person name="Reardon M."/>
            <person name="Webb K."/>
            <person name="Hill J."/>
            <person name="Moffat K."/>
            <person name="Tallon L."/>
            <person name="Van Aken S."/>
            <person name="Lewis M."/>
            <person name="Utterback T."/>
            <person name="Feldblyum T."/>
            <person name="Zismann V."/>
            <person name="Iobst S."/>
            <person name="Hsiao J."/>
            <person name="de Vazeille A.R."/>
            <person name="Salzberg S.L."/>
            <person name="White O."/>
            <person name="Fraser C.M."/>
            <person name="Yu Y."/>
            <person name="Kim H."/>
            <person name="Rambo T."/>
            <person name="Currie J."/>
            <person name="Collura K."/>
            <person name="Kernodle-Thompson S."/>
            <person name="Wei F."/>
            <person name="Kudrna K."/>
            <person name="Ammiraju J.S.S."/>
            <person name="Luo M."/>
            <person name="Goicoechea J.L."/>
            <person name="Wing R.A."/>
            <person name="Henry D."/>
            <person name="Oates R."/>
            <person name="Palmer M."/>
            <person name="Pries G."/>
            <person name="Saski C."/>
            <person name="Simmons J."/>
            <person name="Soderlund C."/>
            <person name="Nelson W."/>
            <person name="de la Bastide M."/>
            <person name="Spiegel L."/>
            <person name="Nascimento L."/>
            <person name="Huang E."/>
            <person name="Preston R."/>
            <person name="Zutavern T."/>
            <person name="Palmer L."/>
            <person name="O'Shaughnessy A."/>
            <person name="Dike S."/>
            <person name="McCombie W.R."/>
            <person name="Minx P."/>
            <person name="Cordum H."/>
            <person name="Wilson R."/>
            <person name="Jin W."/>
            <person name="Lee H.R."/>
            <person name="Jiang J."/>
            <person name="Jackson S."/>
        </authorList>
    </citation>
    <scope>NUCLEOTIDE SEQUENCE [LARGE SCALE GENOMIC DNA]</scope>
    <source>
        <strain>cv. Nipponbare</strain>
    </source>
</reference>
<reference key="2">
    <citation type="journal article" date="2005" name="Nature">
        <title>The map-based sequence of the rice genome.</title>
        <authorList>
            <consortium name="International rice genome sequencing project (IRGSP)"/>
        </authorList>
    </citation>
    <scope>NUCLEOTIDE SEQUENCE [LARGE SCALE GENOMIC DNA]</scope>
    <source>
        <strain>cv. Nipponbare</strain>
    </source>
</reference>
<reference key="3">
    <citation type="journal article" date="2008" name="Nucleic Acids Res.">
        <title>The rice annotation project database (RAP-DB): 2008 update.</title>
        <authorList>
            <consortium name="The rice annotation project (RAP)"/>
        </authorList>
    </citation>
    <scope>GENOME REANNOTATION</scope>
    <source>
        <strain>cv. Nipponbare</strain>
    </source>
</reference>
<reference key="4">
    <citation type="journal article" date="2013" name="Rice">
        <title>Improvement of the Oryza sativa Nipponbare reference genome using next generation sequence and optical map data.</title>
        <authorList>
            <person name="Kawahara Y."/>
            <person name="de la Bastide M."/>
            <person name="Hamilton J.P."/>
            <person name="Kanamori H."/>
            <person name="McCombie W.R."/>
            <person name="Ouyang S."/>
            <person name="Schwartz D.C."/>
            <person name="Tanaka T."/>
            <person name="Wu J."/>
            <person name="Zhou S."/>
            <person name="Childs K.L."/>
            <person name="Davidson R.M."/>
            <person name="Lin H."/>
            <person name="Quesada-Ocampo L."/>
            <person name="Vaillancourt B."/>
            <person name="Sakai H."/>
            <person name="Lee S.S."/>
            <person name="Kim J."/>
            <person name="Numa H."/>
            <person name="Itoh T."/>
            <person name="Buell C.R."/>
            <person name="Matsumoto T."/>
        </authorList>
    </citation>
    <scope>GENOME REANNOTATION</scope>
    <source>
        <strain>cv. Nipponbare</strain>
    </source>
</reference>
<reference key="5">
    <citation type="journal article" date="2006" name="Funct. Integr. Genomics">
        <title>Structure and expression analysis of early auxin-responsive Aux/IAA gene family in rice (Oryza sativa).</title>
        <authorList>
            <person name="Jain M."/>
            <person name="Kaur N."/>
            <person name="Garg R."/>
            <person name="Thakur J.K."/>
            <person name="Tyagi A.K."/>
            <person name="Khurana J.P."/>
        </authorList>
    </citation>
    <scope>TISSUE SPECIFICITY</scope>
    <scope>INDUCTION</scope>
    <scope>NOMENCLATURE</scope>
</reference>
<dbReference type="EMBL" id="AC145379">
    <property type="protein sequence ID" value="AAS07281.1"/>
    <property type="molecule type" value="Genomic_DNA"/>
</dbReference>
<dbReference type="EMBL" id="AC145780">
    <property type="protein sequence ID" value="AAU89153.1"/>
    <property type="molecule type" value="Genomic_DNA"/>
</dbReference>
<dbReference type="EMBL" id="DP000009">
    <property type="protein sequence ID" value="ABF97770.1"/>
    <property type="molecule type" value="Genomic_DNA"/>
</dbReference>
<dbReference type="EMBL" id="AP008209">
    <property type="protein sequence ID" value="BAF12627.2"/>
    <property type="status" value="ALT_SEQ"/>
    <property type="molecule type" value="Genomic_DNA"/>
</dbReference>
<dbReference type="EMBL" id="AP014959">
    <property type="protein sequence ID" value="BAS85383.1"/>
    <property type="status" value="ALT_SEQ"/>
    <property type="molecule type" value="Genomic_DNA"/>
</dbReference>
<dbReference type="RefSeq" id="XP_015628434.1">
    <property type="nucleotide sequence ID" value="XM_015772948.1"/>
</dbReference>
<dbReference type="SMR" id="Q75GK0"/>
<dbReference type="STRING" id="39947.Q75GK0"/>
<dbReference type="PaxDb" id="39947-Q75GK0"/>
<dbReference type="EnsemblPlants" id="Os03t0633500-01">
    <property type="protein sequence ID" value="Os03t0633500-01"/>
    <property type="gene ID" value="Os03g0633500"/>
</dbReference>
<dbReference type="Gramene" id="Os03t0633500-01">
    <property type="protein sequence ID" value="Os03t0633500-01"/>
    <property type="gene ID" value="Os03g0633500"/>
</dbReference>
<dbReference type="KEGG" id="dosa:Os03g0633500"/>
<dbReference type="InParanoid" id="Q75GK0"/>
<dbReference type="OrthoDB" id="642974at2759"/>
<dbReference type="PlantReactome" id="R-OSA-5608118">
    <property type="pathway name" value="Auxin signalling"/>
</dbReference>
<dbReference type="PlantReactome" id="R-OSA-9030557">
    <property type="pathway name" value="Lateral root initiation"/>
</dbReference>
<dbReference type="Proteomes" id="UP000000763">
    <property type="component" value="Chromosome 3"/>
</dbReference>
<dbReference type="Proteomes" id="UP000059680">
    <property type="component" value="Chromosome 3"/>
</dbReference>
<dbReference type="GO" id="GO:0005634">
    <property type="term" value="C:nucleus"/>
    <property type="evidence" value="ECO:0007669"/>
    <property type="project" value="UniProtKB-SubCell"/>
</dbReference>
<dbReference type="GO" id="GO:0009734">
    <property type="term" value="P:auxin-activated signaling pathway"/>
    <property type="evidence" value="ECO:0007669"/>
    <property type="project" value="UniProtKB-KW"/>
</dbReference>
<dbReference type="GO" id="GO:0006355">
    <property type="term" value="P:regulation of DNA-templated transcription"/>
    <property type="evidence" value="ECO:0007669"/>
    <property type="project" value="InterPro"/>
</dbReference>
<dbReference type="GO" id="GO:0009733">
    <property type="term" value="P:response to auxin"/>
    <property type="evidence" value="ECO:0000305"/>
    <property type="project" value="Gramene"/>
</dbReference>
<dbReference type="FunFam" id="3.10.20.90:FF:000078">
    <property type="entry name" value="Auxin-responsive protein"/>
    <property type="match status" value="1"/>
</dbReference>
<dbReference type="Gene3D" id="3.10.20.90">
    <property type="entry name" value="Phosphatidylinositol 3-kinase Catalytic Subunit, Chain A, domain 1"/>
    <property type="match status" value="1"/>
</dbReference>
<dbReference type="InterPro" id="IPR033389">
    <property type="entry name" value="AUX/IAA_dom"/>
</dbReference>
<dbReference type="InterPro" id="IPR003311">
    <property type="entry name" value="AUX_IAA"/>
</dbReference>
<dbReference type="InterPro" id="IPR053793">
    <property type="entry name" value="PB1-like"/>
</dbReference>
<dbReference type="PANTHER" id="PTHR31734:SF103">
    <property type="entry name" value="AUXIN-RESPONSIVE PROTEIN IAA16"/>
    <property type="match status" value="1"/>
</dbReference>
<dbReference type="PANTHER" id="PTHR31734">
    <property type="entry name" value="AUXIN-RESPONSIVE PROTEIN IAA17"/>
    <property type="match status" value="1"/>
</dbReference>
<dbReference type="Pfam" id="PF02309">
    <property type="entry name" value="AUX_IAA"/>
    <property type="match status" value="1"/>
</dbReference>
<dbReference type="SUPFAM" id="SSF54277">
    <property type="entry name" value="CAD &amp; PB1 domains"/>
    <property type="match status" value="1"/>
</dbReference>
<dbReference type="PROSITE" id="PS51745">
    <property type="entry name" value="PB1"/>
    <property type="match status" value="1"/>
</dbReference>
<feature type="chain" id="PRO_0000223210" description="Auxin-responsive protein IAA11">
    <location>
        <begin position="1"/>
        <end position="233"/>
    </location>
</feature>
<feature type="domain" description="PB1" evidence="2">
    <location>
        <begin position="122"/>
        <end position="217"/>
    </location>
</feature>
<feature type="region of interest" description="Disordered" evidence="3">
    <location>
        <begin position="1"/>
        <end position="27"/>
    </location>
</feature>
<feature type="region of interest" description="Disordered" evidence="3">
    <location>
        <begin position="46"/>
        <end position="100"/>
    </location>
</feature>
<feature type="short sequence motif" description="EAR-like (transcriptional repression)" evidence="1">
    <location>
        <begin position="11"/>
        <end position="15"/>
    </location>
</feature>
<feature type="compositionally biased region" description="Acidic residues" evidence="3">
    <location>
        <begin position="54"/>
        <end position="63"/>
    </location>
</feature>
<proteinExistence type="evidence at transcript level"/>
<keyword id="KW-0927">Auxin signaling pathway</keyword>
<keyword id="KW-0539">Nucleus</keyword>
<keyword id="KW-1185">Reference proteome</keyword>
<keyword id="KW-0678">Repressor</keyword>
<keyword id="KW-0804">Transcription</keyword>
<keyword id="KW-0805">Transcription regulation</keyword>
<evidence type="ECO:0000250" key="1"/>
<evidence type="ECO:0000255" key="2">
    <source>
        <dbReference type="PROSITE-ProRule" id="PRU01081"/>
    </source>
</evidence>
<evidence type="ECO:0000256" key="3">
    <source>
        <dbReference type="SAM" id="MobiDB-lite"/>
    </source>
</evidence>
<evidence type="ECO:0000269" key="4">
    <source>
    </source>
</evidence>
<evidence type="ECO:0000305" key="5"/>
<name>IAA11_ORYSJ</name>